<feature type="signal peptide" evidence="2">
    <location>
        <begin position="1"/>
        <end position="21"/>
    </location>
</feature>
<feature type="chain" id="PRO_0000431712" description="Probable myosin-binding protein 6" evidence="2">
    <location>
        <begin position="22"/>
        <end position="542"/>
    </location>
</feature>
<feature type="transmembrane region" description="Helical" evidence="2">
    <location>
        <begin position="39"/>
        <end position="59"/>
    </location>
</feature>
<feature type="domain" description="GTD-binding" evidence="3">
    <location>
        <begin position="300"/>
        <end position="398"/>
    </location>
</feature>
<feature type="region of interest" description="Disordered" evidence="4">
    <location>
        <begin position="219"/>
        <end position="239"/>
    </location>
</feature>
<feature type="region of interest" description="Disordered" evidence="4">
    <location>
        <begin position="419"/>
        <end position="480"/>
    </location>
</feature>
<feature type="compositionally biased region" description="Polar residues" evidence="4">
    <location>
        <begin position="437"/>
        <end position="456"/>
    </location>
</feature>
<feature type="compositionally biased region" description="Basic and acidic residues" evidence="4">
    <location>
        <begin position="471"/>
        <end position="480"/>
    </location>
</feature>
<feature type="sequence conflict" description="In Ref. 3; BAC42795." evidence="5" ref="3">
    <original>T</original>
    <variation>A</variation>
    <location>
        <position position="297"/>
    </location>
</feature>
<name>MYOB6_ARATH</name>
<protein>
    <recommendedName>
        <fullName evidence="5">Probable myosin-binding protein 6</fullName>
    </recommendedName>
</protein>
<accession>F4HVS6</accession>
<accession>Q8GXL4</accession>
<accession>Q9S7T6</accession>
<sequence>MYIQLLCFFLFLFLLLQATMSKRSFKKFVEQELGSLPHFLIYTVLEWSLIVFLFIDGVIAFLSNQFAKFFDLNIPCLLCTRIDHILVPRDPQFYYNESICDSHKKKVSSLAYCHVHKKLSEIKHMCEGCLLSFATEKDSDCDTYKSLIGILHKDLELLIDDERDLPLAFKKDDNLVQTTKNLVDYKTNNIKNDSLKQHCSCCGELLKIKSEKLPKNNNSFLAPAPSPRVSHNKLSENESEFKDMDVDRTPSFVRGGNKFFGIPLSDSAQNSPRWSVRSLKKSVLNKTENASDTTDPTGESILNQLKKEVRLDKKSLIDLYMELDEERSASAVAANEAMAMITRLQAEKAAVQMEALQYQRMMDEQAEYDQEALQSMSSELAKREEEMKELEAEFEVYREKYGCLTDQEDAREEFHKQNGNASAYDDCQETKPVSDLAVSSSNQQENGENIDQNGQSKRSEESTAENVVSADEEKGSESKEGIVKELSEITERLSTLQSNGDLLKHIADVLDVSEGEAILLQISQNLHMLRSFVAMPSESMNL</sequence>
<dbReference type="EMBL" id="AC008263">
    <property type="protein sequence ID" value="AAD55293.1"/>
    <property type="status" value="ALT_INIT"/>
    <property type="molecule type" value="Genomic_DNA"/>
</dbReference>
<dbReference type="EMBL" id="AC013258">
    <property type="protein sequence ID" value="AAG51939.1"/>
    <property type="status" value="ALT_INIT"/>
    <property type="molecule type" value="Genomic_DNA"/>
</dbReference>
<dbReference type="EMBL" id="CP002684">
    <property type="protein sequence ID" value="AEE35636.1"/>
    <property type="molecule type" value="Genomic_DNA"/>
</dbReference>
<dbReference type="EMBL" id="AK118172">
    <property type="protein sequence ID" value="BAC42795.1"/>
    <property type="molecule type" value="mRNA"/>
</dbReference>
<dbReference type="PIR" id="G96777">
    <property type="entry name" value="G96777"/>
</dbReference>
<dbReference type="RefSeq" id="NP_177621.2">
    <property type="nucleotide sequence ID" value="NM_106141.3"/>
</dbReference>
<dbReference type="SMR" id="F4HVS6"/>
<dbReference type="STRING" id="3702.F4HVS6"/>
<dbReference type="iPTMnet" id="F4HVS6"/>
<dbReference type="PaxDb" id="3702-AT1G74830.1"/>
<dbReference type="ProteomicsDB" id="248921"/>
<dbReference type="EnsemblPlants" id="AT1G74830.1">
    <property type="protein sequence ID" value="AT1G74830.1"/>
    <property type="gene ID" value="AT1G74830"/>
</dbReference>
<dbReference type="GeneID" id="843822"/>
<dbReference type="Gramene" id="AT1G74830.1">
    <property type="protein sequence ID" value="AT1G74830.1"/>
    <property type="gene ID" value="AT1G74830"/>
</dbReference>
<dbReference type="KEGG" id="ath:AT1G74830"/>
<dbReference type="Araport" id="AT1G74830"/>
<dbReference type="TAIR" id="AT1G74830"/>
<dbReference type="eggNOG" id="ENOG502R2U1">
    <property type="taxonomic scope" value="Eukaryota"/>
</dbReference>
<dbReference type="HOGENOM" id="CLU_009392_3_0_1"/>
<dbReference type="InParanoid" id="F4HVS6"/>
<dbReference type="OMA" id="WAIRISR"/>
<dbReference type="PRO" id="PR:F4HVS6"/>
<dbReference type="Proteomes" id="UP000006548">
    <property type="component" value="Chromosome 1"/>
</dbReference>
<dbReference type="ExpressionAtlas" id="F4HVS6">
    <property type="expression patterns" value="baseline and differential"/>
</dbReference>
<dbReference type="GO" id="GO:0016020">
    <property type="term" value="C:membrane"/>
    <property type="evidence" value="ECO:0007669"/>
    <property type="project" value="UniProtKB-SubCell"/>
</dbReference>
<dbReference type="GO" id="GO:0080115">
    <property type="term" value="F:myosin XI tail binding"/>
    <property type="evidence" value="ECO:0007669"/>
    <property type="project" value="UniProtKB-ARBA"/>
</dbReference>
<dbReference type="InterPro" id="IPR007656">
    <property type="entry name" value="GTD-bd"/>
</dbReference>
<dbReference type="InterPro" id="IPR039306">
    <property type="entry name" value="MYOB"/>
</dbReference>
<dbReference type="PANTHER" id="PTHR31448">
    <property type="entry name" value="MYOSIN-BINDING PROTEIN 2"/>
    <property type="match status" value="1"/>
</dbReference>
<dbReference type="PANTHER" id="PTHR31448:SF9">
    <property type="entry name" value="MYOSIN-BINDING PROTEIN 6-RELATED"/>
    <property type="match status" value="1"/>
</dbReference>
<dbReference type="Pfam" id="PF04576">
    <property type="entry name" value="Zein-binding"/>
    <property type="match status" value="1"/>
</dbReference>
<dbReference type="PROSITE" id="PS51775">
    <property type="entry name" value="GTD_BINDING"/>
    <property type="match status" value="1"/>
</dbReference>
<evidence type="ECO:0000250" key="1">
    <source>
        <dbReference type="UniProtKB" id="F4HXQ7"/>
    </source>
</evidence>
<evidence type="ECO:0000255" key="2"/>
<evidence type="ECO:0000255" key="3">
    <source>
        <dbReference type="PROSITE-ProRule" id="PRU01111"/>
    </source>
</evidence>
<evidence type="ECO:0000256" key="4">
    <source>
        <dbReference type="SAM" id="MobiDB-lite"/>
    </source>
</evidence>
<evidence type="ECO:0000305" key="5"/>
<evidence type="ECO:0000312" key="6">
    <source>
        <dbReference type="Araport" id="AT1G74830"/>
    </source>
</evidence>
<evidence type="ECO:0000312" key="7">
    <source>
        <dbReference type="EMBL" id="AAD55293.1"/>
    </source>
</evidence>
<evidence type="ECO:0000312" key="8">
    <source>
        <dbReference type="Proteomes" id="UP000006548"/>
    </source>
</evidence>
<reference key="1">
    <citation type="journal article" date="2000" name="Nature">
        <title>Sequence and analysis of chromosome 1 of the plant Arabidopsis thaliana.</title>
        <authorList>
            <person name="Theologis A."/>
            <person name="Ecker J.R."/>
            <person name="Palm C.J."/>
            <person name="Federspiel N.A."/>
            <person name="Kaul S."/>
            <person name="White O."/>
            <person name="Alonso J."/>
            <person name="Altafi H."/>
            <person name="Araujo R."/>
            <person name="Bowman C.L."/>
            <person name="Brooks S.Y."/>
            <person name="Buehler E."/>
            <person name="Chan A."/>
            <person name="Chao Q."/>
            <person name="Chen H."/>
            <person name="Cheuk R.F."/>
            <person name="Chin C.W."/>
            <person name="Chung M.K."/>
            <person name="Conn L."/>
            <person name="Conway A.B."/>
            <person name="Conway A.R."/>
            <person name="Creasy T.H."/>
            <person name="Dewar K."/>
            <person name="Dunn P."/>
            <person name="Etgu P."/>
            <person name="Feldblyum T.V."/>
            <person name="Feng J.-D."/>
            <person name="Fong B."/>
            <person name="Fujii C.Y."/>
            <person name="Gill J.E."/>
            <person name="Goldsmith A.D."/>
            <person name="Haas B."/>
            <person name="Hansen N.F."/>
            <person name="Hughes B."/>
            <person name="Huizar L."/>
            <person name="Hunter J.L."/>
            <person name="Jenkins J."/>
            <person name="Johnson-Hopson C."/>
            <person name="Khan S."/>
            <person name="Khaykin E."/>
            <person name="Kim C.J."/>
            <person name="Koo H.L."/>
            <person name="Kremenetskaia I."/>
            <person name="Kurtz D.B."/>
            <person name="Kwan A."/>
            <person name="Lam B."/>
            <person name="Langin-Hooper S."/>
            <person name="Lee A."/>
            <person name="Lee J.M."/>
            <person name="Lenz C.A."/>
            <person name="Li J.H."/>
            <person name="Li Y.-P."/>
            <person name="Lin X."/>
            <person name="Liu S.X."/>
            <person name="Liu Z.A."/>
            <person name="Luros J.S."/>
            <person name="Maiti R."/>
            <person name="Marziali A."/>
            <person name="Militscher J."/>
            <person name="Miranda M."/>
            <person name="Nguyen M."/>
            <person name="Nierman W.C."/>
            <person name="Osborne B.I."/>
            <person name="Pai G."/>
            <person name="Peterson J."/>
            <person name="Pham P.K."/>
            <person name="Rizzo M."/>
            <person name="Rooney T."/>
            <person name="Rowley D."/>
            <person name="Sakano H."/>
            <person name="Salzberg S.L."/>
            <person name="Schwartz J.R."/>
            <person name="Shinn P."/>
            <person name="Southwick A.M."/>
            <person name="Sun H."/>
            <person name="Tallon L.J."/>
            <person name="Tambunga G."/>
            <person name="Toriumi M.J."/>
            <person name="Town C.D."/>
            <person name="Utterback T."/>
            <person name="Van Aken S."/>
            <person name="Vaysberg M."/>
            <person name="Vysotskaia V.S."/>
            <person name="Walker M."/>
            <person name="Wu D."/>
            <person name="Yu G."/>
            <person name="Fraser C.M."/>
            <person name="Venter J.C."/>
            <person name="Davis R.W."/>
        </authorList>
    </citation>
    <scope>NUCLEOTIDE SEQUENCE [LARGE SCALE GENOMIC DNA]</scope>
    <source>
        <strain>cv. Columbia</strain>
    </source>
</reference>
<reference key="2">
    <citation type="journal article" date="2017" name="Plant J.">
        <title>Araport11: a complete reannotation of the Arabidopsis thaliana reference genome.</title>
        <authorList>
            <person name="Cheng C.Y."/>
            <person name="Krishnakumar V."/>
            <person name="Chan A.P."/>
            <person name="Thibaud-Nissen F."/>
            <person name="Schobel S."/>
            <person name="Town C.D."/>
        </authorList>
    </citation>
    <scope>GENOME REANNOTATION</scope>
    <source>
        <strain>cv. Columbia</strain>
    </source>
</reference>
<reference key="3">
    <citation type="journal article" date="2002" name="Science">
        <title>Functional annotation of a full-length Arabidopsis cDNA collection.</title>
        <authorList>
            <person name="Seki M."/>
            <person name="Narusaka M."/>
            <person name="Kamiya A."/>
            <person name="Ishida J."/>
            <person name="Satou M."/>
            <person name="Sakurai T."/>
            <person name="Nakajima M."/>
            <person name="Enju A."/>
            <person name="Akiyama K."/>
            <person name="Oono Y."/>
            <person name="Muramatsu M."/>
            <person name="Hayashizaki Y."/>
            <person name="Kawai J."/>
            <person name="Carninci P."/>
            <person name="Itoh M."/>
            <person name="Ishii Y."/>
            <person name="Arakawa T."/>
            <person name="Shibata K."/>
            <person name="Shinagawa A."/>
            <person name="Shinozaki K."/>
        </authorList>
    </citation>
    <scope>NUCLEOTIDE SEQUENCE [LARGE SCALE MRNA]</scope>
    <source>
        <strain>cv. Columbia</strain>
    </source>
</reference>
<organism evidence="8">
    <name type="scientific">Arabidopsis thaliana</name>
    <name type="common">Mouse-ear cress</name>
    <dbReference type="NCBI Taxonomy" id="3702"/>
    <lineage>
        <taxon>Eukaryota</taxon>
        <taxon>Viridiplantae</taxon>
        <taxon>Streptophyta</taxon>
        <taxon>Embryophyta</taxon>
        <taxon>Tracheophyta</taxon>
        <taxon>Spermatophyta</taxon>
        <taxon>Magnoliopsida</taxon>
        <taxon>eudicotyledons</taxon>
        <taxon>Gunneridae</taxon>
        <taxon>Pentapetalae</taxon>
        <taxon>rosids</taxon>
        <taxon>malvids</taxon>
        <taxon>Brassicales</taxon>
        <taxon>Brassicaceae</taxon>
        <taxon>Camelineae</taxon>
        <taxon>Arabidopsis</taxon>
    </lineage>
</organism>
<gene>
    <name evidence="5" type="primary">MYOB6</name>
    <name evidence="6" type="ordered locus">At1g74830</name>
    <name evidence="7" type="ORF">F9E10.32</name>
</gene>
<proteinExistence type="evidence at transcript level"/>
<keyword id="KW-0472">Membrane</keyword>
<keyword id="KW-1185">Reference proteome</keyword>
<keyword id="KW-0732">Signal</keyword>
<keyword id="KW-0812">Transmembrane</keyword>
<keyword id="KW-1133">Transmembrane helix</keyword>
<comment type="function">
    <text evidence="1">Probable membrane-anchored myosin receptors.</text>
</comment>
<comment type="subcellular location">
    <subcellularLocation>
        <location evidence="2">Membrane</location>
        <topology evidence="2">Single-pass membrane protein</topology>
    </subcellularLocation>
</comment>
<comment type="sequence caution" evidence="5">
    <conflict type="erroneous initiation">
        <sequence resource="EMBL-CDS" id="AAD55293"/>
    </conflict>
    <text>Truncated N-terminus.</text>
</comment>
<comment type="sequence caution" evidence="5">
    <conflict type="erroneous initiation">
        <sequence resource="EMBL-CDS" id="AAG51939"/>
    </conflict>
    <text>Truncated N-terminus.</text>
</comment>